<protein>
    <recommendedName>
        <fullName evidence="1">ATP synthase subunit beta</fullName>
        <ecNumber evidence="1">7.1.2.2</ecNumber>
    </recommendedName>
    <alternativeName>
        <fullName evidence="1">ATP synthase F1 sector subunit beta</fullName>
    </alternativeName>
    <alternativeName>
        <fullName evidence="1">F-ATPase subunit beta</fullName>
    </alternativeName>
</protein>
<reference key="1">
    <citation type="submission" date="2007-04" db="EMBL/GenBank/DDBJ databases">
        <title>Complete sequence of Pseudomonas mendocina ymp.</title>
        <authorList>
            <consortium name="US DOE Joint Genome Institute"/>
            <person name="Copeland A."/>
            <person name="Lucas S."/>
            <person name="Lapidus A."/>
            <person name="Barry K."/>
            <person name="Glavina del Rio T."/>
            <person name="Dalin E."/>
            <person name="Tice H."/>
            <person name="Pitluck S."/>
            <person name="Kiss H."/>
            <person name="Brettin T."/>
            <person name="Detter J.C."/>
            <person name="Bruce D."/>
            <person name="Han C."/>
            <person name="Schmutz J."/>
            <person name="Larimer F."/>
            <person name="Land M."/>
            <person name="Hauser L."/>
            <person name="Kyrpides N."/>
            <person name="Mikhailova N."/>
            <person name="Hersman L."/>
            <person name="Dubois J."/>
            <person name="Maurice P."/>
            <person name="Richardson P."/>
        </authorList>
    </citation>
    <scope>NUCLEOTIDE SEQUENCE [LARGE SCALE GENOMIC DNA]</scope>
    <source>
        <strain>ymp</strain>
    </source>
</reference>
<proteinExistence type="inferred from homology"/>
<keyword id="KW-0066">ATP synthesis</keyword>
<keyword id="KW-0067">ATP-binding</keyword>
<keyword id="KW-0997">Cell inner membrane</keyword>
<keyword id="KW-1003">Cell membrane</keyword>
<keyword id="KW-0139">CF(1)</keyword>
<keyword id="KW-0375">Hydrogen ion transport</keyword>
<keyword id="KW-0406">Ion transport</keyword>
<keyword id="KW-0472">Membrane</keyword>
<keyword id="KW-0547">Nucleotide-binding</keyword>
<keyword id="KW-1278">Translocase</keyword>
<keyword id="KW-0813">Transport</keyword>
<evidence type="ECO:0000255" key="1">
    <source>
        <dbReference type="HAMAP-Rule" id="MF_01347"/>
    </source>
</evidence>
<dbReference type="EC" id="7.1.2.2" evidence="1"/>
<dbReference type="EMBL" id="CP000680">
    <property type="protein sequence ID" value="ABP87353.1"/>
    <property type="molecule type" value="Genomic_DNA"/>
</dbReference>
<dbReference type="SMR" id="A4Y187"/>
<dbReference type="STRING" id="399739.Pmen_4607"/>
<dbReference type="KEGG" id="pmy:Pmen_4607"/>
<dbReference type="PATRIC" id="fig|399739.8.peg.4672"/>
<dbReference type="eggNOG" id="COG0055">
    <property type="taxonomic scope" value="Bacteria"/>
</dbReference>
<dbReference type="HOGENOM" id="CLU_022398_0_2_6"/>
<dbReference type="OrthoDB" id="9801639at2"/>
<dbReference type="GO" id="GO:0005886">
    <property type="term" value="C:plasma membrane"/>
    <property type="evidence" value="ECO:0007669"/>
    <property type="project" value="UniProtKB-SubCell"/>
</dbReference>
<dbReference type="GO" id="GO:0045259">
    <property type="term" value="C:proton-transporting ATP synthase complex"/>
    <property type="evidence" value="ECO:0007669"/>
    <property type="project" value="UniProtKB-KW"/>
</dbReference>
<dbReference type="GO" id="GO:0005524">
    <property type="term" value="F:ATP binding"/>
    <property type="evidence" value="ECO:0007669"/>
    <property type="project" value="UniProtKB-UniRule"/>
</dbReference>
<dbReference type="GO" id="GO:0016887">
    <property type="term" value="F:ATP hydrolysis activity"/>
    <property type="evidence" value="ECO:0007669"/>
    <property type="project" value="InterPro"/>
</dbReference>
<dbReference type="GO" id="GO:0046933">
    <property type="term" value="F:proton-transporting ATP synthase activity, rotational mechanism"/>
    <property type="evidence" value="ECO:0007669"/>
    <property type="project" value="UniProtKB-UniRule"/>
</dbReference>
<dbReference type="CDD" id="cd18110">
    <property type="entry name" value="ATP-synt_F1_beta_C"/>
    <property type="match status" value="1"/>
</dbReference>
<dbReference type="CDD" id="cd18115">
    <property type="entry name" value="ATP-synt_F1_beta_N"/>
    <property type="match status" value="1"/>
</dbReference>
<dbReference type="CDD" id="cd01133">
    <property type="entry name" value="F1-ATPase_beta_CD"/>
    <property type="match status" value="1"/>
</dbReference>
<dbReference type="FunFam" id="1.10.1140.10:FF:000001">
    <property type="entry name" value="ATP synthase subunit beta"/>
    <property type="match status" value="1"/>
</dbReference>
<dbReference type="FunFam" id="3.40.50.300:FF:000004">
    <property type="entry name" value="ATP synthase subunit beta"/>
    <property type="match status" value="1"/>
</dbReference>
<dbReference type="Gene3D" id="2.40.10.170">
    <property type="match status" value="1"/>
</dbReference>
<dbReference type="Gene3D" id="1.10.1140.10">
    <property type="entry name" value="Bovine Mitochondrial F1-atpase, Atp Synthase Beta Chain, Chain D, domain 3"/>
    <property type="match status" value="1"/>
</dbReference>
<dbReference type="Gene3D" id="3.40.50.300">
    <property type="entry name" value="P-loop containing nucleotide triphosphate hydrolases"/>
    <property type="match status" value="1"/>
</dbReference>
<dbReference type="HAMAP" id="MF_01347">
    <property type="entry name" value="ATP_synth_beta_bact"/>
    <property type="match status" value="1"/>
</dbReference>
<dbReference type="InterPro" id="IPR003593">
    <property type="entry name" value="AAA+_ATPase"/>
</dbReference>
<dbReference type="InterPro" id="IPR055190">
    <property type="entry name" value="ATP-synt_VA_C"/>
</dbReference>
<dbReference type="InterPro" id="IPR005722">
    <property type="entry name" value="ATP_synth_F1_bsu"/>
</dbReference>
<dbReference type="InterPro" id="IPR020003">
    <property type="entry name" value="ATPase_a/bsu_AS"/>
</dbReference>
<dbReference type="InterPro" id="IPR050053">
    <property type="entry name" value="ATPase_alpha/beta_chains"/>
</dbReference>
<dbReference type="InterPro" id="IPR004100">
    <property type="entry name" value="ATPase_F1/V1/A1_a/bsu_N"/>
</dbReference>
<dbReference type="InterPro" id="IPR036121">
    <property type="entry name" value="ATPase_F1/V1/A1_a/bsu_N_sf"/>
</dbReference>
<dbReference type="InterPro" id="IPR000194">
    <property type="entry name" value="ATPase_F1/V1/A1_a/bsu_nucl-bd"/>
</dbReference>
<dbReference type="InterPro" id="IPR024034">
    <property type="entry name" value="ATPase_F1/V1_b/a_C"/>
</dbReference>
<dbReference type="InterPro" id="IPR027417">
    <property type="entry name" value="P-loop_NTPase"/>
</dbReference>
<dbReference type="NCBIfam" id="TIGR01039">
    <property type="entry name" value="atpD"/>
    <property type="match status" value="1"/>
</dbReference>
<dbReference type="PANTHER" id="PTHR15184">
    <property type="entry name" value="ATP SYNTHASE"/>
    <property type="match status" value="1"/>
</dbReference>
<dbReference type="PANTHER" id="PTHR15184:SF71">
    <property type="entry name" value="ATP SYNTHASE SUBUNIT BETA, MITOCHONDRIAL"/>
    <property type="match status" value="1"/>
</dbReference>
<dbReference type="Pfam" id="PF00006">
    <property type="entry name" value="ATP-synt_ab"/>
    <property type="match status" value="1"/>
</dbReference>
<dbReference type="Pfam" id="PF02874">
    <property type="entry name" value="ATP-synt_ab_N"/>
    <property type="match status" value="1"/>
</dbReference>
<dbReference type="Pfam" id="PF22919">
    <property type="entry name" value="ATP-synt_VA_C"/>
    <property type="match status" value="1"/>
</dbReference>
<dbReference type="SMART" id="SM00382">
    <property type="entry name" value="AAA"/>
    <property type="match status" value="1"/>
</dbReference>
<dbReference type="SUPFAM" id="SSF47917">
    <property type="entry name" value="C-terminal domain of alpha and beta subunits of F1 ATP synthase"/>
    <property type="match status" value="1"/>
</dbReference>
<dbReference type="SUPFAM" id="SSF50615">
    <property type="entry name" value="N-terminal domain of alpha and beta subunits of F1 ATP synthase"/>
    <property type="match status" value="1"/>
</dbReference>
<dbReference type="SUPFAM" id="SSF52540">
    <property type="entry name" value="P-loop containing nucleoside triphosphate hydrolases"/>
    <property type="match status" value="1"/>
</dbReference>
<dbReference type="PROSITE" id="PS00152">
    <property type="entry name" value="ATPASE_ALPHA_BETA"/>
    <property type="match status" value="1"/>
</dbReference>
<sequence>MSSGRIVQIIGAVIDVEFPRDQVPNVYEALKVQGAETTLEVQQQLGDGVVRTIAMGSTEGLKRGLDVNSTGKAISVPVGKATLGRIMDVLGNPIDEAGPIGEEEQWEIHRAAPSYAEQAGGNDLLETGIKVIDLVCPFAKGGKVGLFGGAGVGKTVNMMELIRNIAIEHSGYSVFAGVGERTREGNDFYHEMKDSNVLDKVALVYGQMNEPPGNRLRVALTGLTMAEKFRDEGRDVLLFVDNIYRYTLAGTEVSALLGRMPSAVGYQPTLAEEMGVLQERITSTKKGSITSIQAVYVPADDLTDPSPATTFAHLDATVVLSRDIASLGIYPAVDPLDSTSRQLDPNVIGQEHYETARGVQYVLQRYKELKDIIAILGMDELSEDDKLLVARARKIQRFLSQPFFVAEVFTGAPGKYVSLKDTIAGFSGILKGDYDHLPEQAFYMVGGIDEAIEKAKKL</sequence>
<accession>A4Y187</accession>
<comment type="function">
    <text evidence="1">Produces ATP from ADP in the presence of a proton gradient across the membrane. The catalytic sites are hosted primarily by the beta subunits.</text>
</comment>
<comment type="catalytic activity">
    <reaction evidence="1">
        <text>ATP + H2O + 4 H(+)(in) = ADP + phosphate + 5 H(+)(out)</text>
        <dbReference type="Rhea" id="RHEA:57720"/>
        <dbReference type="ChEBI" id="CHEBI:15377"/>
        <dbReference type="ChEBI" id="CHEBI:15378"/>
        <dbReference type="ChEBI" id="CHEBI:30616"/>
        <dbReference type="ChEBI" id="CHEBI:43474"/>
        <dbReference type="ChEBI" id="CHEBI:456216"/>
        <dbReference type="EC" id="7.1.2.2"/>
    </reaction>
</comment>
<comment type="subunit">
    <text evidence="1">F-type ATPases have 2 components, CF(1) - the catalytic core - and CF(0) - the membrane proton channel. CF(1) has five subunits: alpha(3), beta(3), gamma(1), delta(1), epsilon(1). CF(0) has three main subunits: a(1), b(2) and c(9-12). The alpha and beta chains form an alternating ring which encloses part of the gamma chain. CF(1) is attached to CF(0) by a central stalk formed by the gamma and epsilon chains, while a peripheral stalk is formed by the delta and b chains.</text>
</comment>
<comment type="subcellular location">
    <subcellularLocation>
        <location evidence="1">Cell inner membrane</location>
        <topology evidence="1">Peripheral membrane protein</topology>
    </subcellularLocation>
</comment>
<comment type="similarity">
    <text evidence="1">Belongs to the ATPase alpha/beta chains family.</text>
</comment>
<gene>
    <name evidence="1" type="primary">atpD</name>
    <name type="ordered locus">Pmen_4607</name>
</gene>
<feature type="chain" id="PRO_1000067729" description="ATP synthase subunit beta">
    <location>
        <begin position="1"/>
        <end position="458"/>
    </location>
</feature>
<feature type="binding site" evidence="1">
    <location>
        <begin position="148"/>
        <end position="155"/>
    </location>
    <ligand>
        <name>ATP</name>
        <dbReference type="ChEBI" id="CHEBI:30616"/>
    </ligand>
</feature>
<name>ATPB_ECTM1</name>
<organism>
    <name type="scientific">Ectopseudomonas mendocina (strain ymp)</name>
    <name type="common">Pseudomonas mendocina</name>
    <dbReference type="NCBI Taxonomy" id="399739"/>
    <lineage>
        <taxon>Bacteria</taxon>
        <taxon>Pseudomonadati</taxon>
        <taxon>Pseudomonadota</taxon>
        <taxon>Gammaproteobacteria</taxon>
        <taxon>Pseudomonadales</taxon>
        <taxon>Pseudomonadaceae</taxon>
        <taxon>Ectopseudomonas</taxon>
    </lineage>
</organism>